<keyword id="KW-0066">ATP synthesis</keyword>
<keyword id="KW-0375">Hydrogen ion transport</keyword>
<keyword id="KW-0406">Ion transport</keyword>
<keyword id="KW-0813">Transport</keyword>
<organism>
    <name type="scientific">Clostridium botulinum (strain Langeland / NCTC 10281 / Type F)</name>
    <dbReference type="NCBI Taxonomy" id="441772"/>
    <lineage>
        <taxon>Bacteria</taxon>
        <taxon>Bacillati</taxon>
        <taxon>Bacillota</taxon>
        <taxon>Clostridia</taxon>
        <taxon>Eubacteriales</taxon>
        <taxon>Clostridiaceae</taxon>
        <taxon>Clostridium</taxon>
    </lineage>
</organism>
<name>VATE_CLOBL</name>
<proteinExistence type="inferred from homology"/>
<reference key="1">
    <citation type="submission" date="2007-06" db="EMBL/GenBank/DDBJ databases">
        <authorList>
            <person name="Brinkac L.M."/>
            <person name="Daugherty S."/>
            <person name="Dodson R.J."/>
            <person name="Madupu R."/>
            <person name="Brown J.L."/>
            <person name="Bruce D."/>
            <person name="Detter C."/>
            <person name="Munk C."/>
            <person name="Smith L.A."/>
            <person name="Smith T.J."/>
            <person name="White O."/>
            <person name="Brettin T.S."/>
        </authorList>
    </citation>
    <scope>NUCLEOTIDE SEQUENCE [LARGE SCALE GENOMIC DNA]</scope>
    <source>
        <strain>Langeland / NCTC 10281 / Type F</strain>
    </source>
</reference>
<accession>A7GGL7</accession>
<gene>
    <name evidence="1" type="primary">atpE</name>
    <name type="ordered locus">CLI_2693</name>
</gene>
<comment type="function">
    <text evidence="1">Produces ATP from ADP in the presence of a proton gradient across the membrane.</text>
</comment>
<comment type="similarity">
    <text evidence="1">Belongs to the V-ATPase E subunit family.</text>
</comment>
<dbReference type="EMBL" id="CP000728">
    <property type="protein sequence ID" value="ABS39482.1"/>
    <property type="molecule type" value="Genomic_DNA"/>
</dbReference>
<dbReference type="RefSeq" id="WP_003401371.1">
    <property type="nucleotide sequence ID" value="NC_009699.1"/>
</dbReference>
<dbReference type="SMR" id="A7GGL7"/>
<dbReference type="KEGG" id="cbf:CLI_2693"/>
<dbReference type="HOGENOM" id="CLU_105846_0_0_9"/>
<dbReference type="Proteomes" id="UP000002410">
    <property type="component" value="Chromosome"/>
</dbReference>
<dbReference type="GO" id="GO:0033178">
    <property type="term" value="C:proton-transporting two-sector ATPase complex, catalytic domain"/>
    <property type="evidence" value="ECO:0007669"/>
    <property type="project" value="InterPro"/>
</dbReference>
<dbReference type="GO" id="GO:0005524">
    <property type="term" value="F:ATP binding"/>
    <property type="evidence" value="ECO:0007669"/>
    <property type="project" value="UniProtKB-UniRule"/>
</dbReference>
<dbReference type="GO" id="GO:0046933">
    <property type="term" value="F:proton-transporting ATP synthase activity, rotational mechanism"/>
    <property type="evidence" value="ECO:0007669"/>
    <property type="project" value="UniProtKB-UniRule"/>
</dbReference>
<dbReference type="GO" id="GO:0046961">
    <property type="term" value="F:proton-transporting ATPase activity, rotational mechanism"/>
    <property type="evidence" value="ECO:0007669"/>
    <property type="project" value="InterPro"/>
</dbReference>
<dbReference type="GO" id="GO:0042777">
    <property type="term" value="P:proton motive force-driven plasma membrane ATP synthesis"/>
    <property type="evidence" value="ECO:0007669"/>
    <property type="project" value="UniProtKB-UniRule"/>
</dbReference>
<dbReference type="Gene3D" id="3.30.2320.30">
    <property type="entry name" value="ATP synthase, E subunit, C-terminal"/>
    <property type="match status" value="1"/>
</dbReference>
<dbReference type="Gene3D" id="1.20.5.620">
    <property type="entry name" value="F1F0 ATP synthase subunit B, membrane domain"/>
    <property type="match status" value="1"/>
</dbReference>
<dbReference type="HAMAP" id="MF_00311">
    <property type="entry name" value="ATP_synth_E_arch"/>
    <property type="match status" value="1"/>
</dbReference>
<dbReference type="InterPro" id="IPR028987">
    <property type="entry name" value="ATP_synth_B-like_membr_sf"/>
</dbReference>
<dbReference type="InterPro" id="IPR038495">
    <property type="entry name" value="ATPase_E_C"/>
</dbReference>
<dbReference type="InterPro" id="IPR002842">
    <property type="entry name" value="ATPase_V1_Esu"/>
</dbReference>
<dbReference type="Pfam" id="PF01991">
    <property type="entry name" value="vATP-synt_E"/>
    <property type="match status" value="1"/>
</dbReference>
<dbReference type="SUPFAM" id="SSF81573">
    <property type="entry name" value="F1F0 ATP synthase subunit B, membrane domain"/>
    <property type="match status" value="1"/>
</dbReference>
<dbReference type="SUPFAM" id="SSF160527">
    <property type="entry name" value="V-type ATPase subunit E-like"/>
    <property type="match status" value="1"/>
</dbReference>
<feature type="chain" id="PRO_0000322513" description="V-type ATP synthase subunit E">
    <location>
        <begin position="1"/>
        <end position="199"/>
    </location>
</feature>
<protein>
    <recommendedName>
        <fullName>V-type ATP synthase subunit E</fullName>
    </recommendedName>
    <alternativeName>
        <fullName evidence="1">V-ATPase subunit E</fullName>
    </alternativeName>
</protein>
<sequence length="199" mass="22825">MSNLENLTSKIIEDANKEAEKLLSEAKKEENEIVDEKVKKANKAKEQIIEKTKREAKTKAERVISNTHLKVRNNKLEAKQEMINKVFDEAVIKLQNLPQEEYLNFIKNSILSLDIEGDEEIIVSPNDKNKIDISFILTLNNKLKAKGKKDLLKISNENRNIKGGFILYKNGIEINNSFEALVDSLRDELEQEIIEALFS</sequence>
<evidence type="ECO:0000255" key="1">
    <source>
        <dbReference type="HAMAP-Rule" id="MF_00311"/>
    </source>
</evidence>